<reference key="1">
    <citation type="submission" date="2007-11" db="EMBL/GenBank/DDBJ databases">
        <title>Complete genome sequence of Clostridium phytofermentans ISDg.</title>
        <authorList>
            <person name="Leschine S.B."/>
            <person name="Warnick T.A."/>
            <person name="Blanchard J.L."/>
            <person name="Schnell D.J."/>
            <person name="Petit E.L."/>
            <person name="LaTouf W.G."/>
            <person name="Copeland A."/>
            <person name="Lucas S."/>
            <person name="Lapidus A."/>
            <person name="Barry K."/>
            <person name="Glavina del Rio T."/>
            <person name="Dalin E."/>
            <person name="Tice H."/>
            <person name="Pitluck S."/>
            <person name="Kiss H."/>
            <person name="Brettin T."/>
            <person name="Bruce D."/>
            <person name="Detter J.C."/>
            <person name="Han C."/>
            <person name="Kuske C."/>
            <person name="Schmutz J."/>
            <person name="Larimer F."/>
            <person name="Land M."/>
            <person name="Hauser L."/>
            <person name="Kyrpides N."/>
            <person name="Kim E.A."/>
            <person name="Richardson P."/>
        </authorList>
    </citation>
    <scope>NUCLEOTIDE SEQUENCE [LARGE SCALE GENOMIC DNA]</scope>
    <source>
        <strain>ATCC 700394 / DSM 18823 / ISDg</strain>
    </source>
</reference>
<feature type="chain" id="PRO_1000081322" description="Glycogen synthase">
    <location>
        <begin position="1"/>
        <end position="478"/>
    </location>
</feature>
<feature type="binding site" evidence="1">
    <location>
        <position position="16"/>
    </location>
    <ligand>
        <name>ADP-alpha-D-glucose</name>
        <dbReference type="ChEBI" id="CHEBI:57498"/>
    </ligand>
</feature>
<protein>
    <recommendedName>
        <fullName evidence="1">Glycogen synthase</fullName>
        <ecNumber evidence="1">2.4.1.21</ecNumber>
    </recommendedName>
    <alternativeName>
        <fullName evidence="1">Starch [bacterial glycogen] synthase</fullName>
    </alternativeName>
</protein>
<dbReference type="EC" id="2.4.1.21" evidence="1"/>
<dbReference type="EMBL" id="CP000885">
    <property type="protein sequence ID" value="ABX42857.1"/>
    <property type="molecule type" value="Genomic_DNA"/>
</dbReference>
<dbReference type="RefSeq" id="WP_012200510.1">
    <property type="nucleotide sequence ID" value="NC_010001.1"/>
</dbReference>
<dbReference type="SMR" id="A9KMA3"/>
<dbReference type="STRING" id="357809.Cphy_2496"/>
<dbReference type="CAZy" id="GT5">
    <property type="family name" value="Glycosyltransferase Family 5"/>
</dbReference>
<dbReference type="KEGG" id="cpy:Cphy_2496"/>
<dbReference type="eggNOG" id="COG0297">
    <property type="taxonomic scope" value="Bacteria"/>
</dbReference>
<dbReference type="HOGENOM" id="CLU_009583_18_2_9"/>
<dbReference type="OrthoDB" id="9808590at2"/>
<dbReference type="UniPathway" id="UPA00164"/>
<dbReference type="Proteomes" id="UP000000370">
    <property type="component" value="Chromosome"/>
</dbReference>
<dbReference type="GO" id="GO:0009011">
    <property type="term" value="F:alpha-1,4-glucan glucosyltransferase (ADP-glucose donor) activity"/>
    <property type="evidence" value="ECO:0007669"/>
    <property type="project" value="UniProtKB-UniRule"/>
</dbReference>
<dbReference type="GO" id="GO:0004373">
    <property type="term" value="F:alpha-1,4-glucan glucosyltransferase (UDP-glucose donor) activity"/>
    <property type="evidence" value="ECO:0007669"/>
    <property type="project" value="InterPro"/>
</dbReference>
<dbReference type="GO" id="GO:0005978">
    <property type="term" value="P:glycogen biosynthetic process"/>
    <property type="evidence" value="ECO:0007669"/>
    <property type="project" value="UniProtKB-UniRule"/>
</dbReference>
<dbReference type="CDD" id="cd03791">
    <property type="entry name" value="GT5_Glycogen_synthase_DULL1-like"/>
    <property type="match status" value="1"/>
</dbReference>
<dbReference type="Gene3D" id="3.40.50.2000">
    <property type="entry name" value="Glycogen Phosphorylase B"/>
    <property type="match status" value="2"/>
</dbReference>
<dbReference type="HAMAP" id="MF_00484">
    <property type="entry name" value="Glycogen_synth"/>
    <property type="match status" value="1"/>
</dbReference>
<dbReference type="InterPro" id="IPR001296">
    <property type="entry name" value="Glyco_trans_1"/>
</dbReference>
<dbReference type="InterPro" id="IPR011835">
    <property type="entry name" value="GS/SS"/>
</dbReference>
<dbReference type="InterPro" id="IPR013534">
    <property type="entry name" value="Starch_synth_cat_dom"/>
</dbReference>
<dbReference type="NCBIfam" id="TIGR02095">
    <property type="entry name" value="glgA"/>
    <property type="match status" value="1"/>
</dbReference>
<dbReference type="NCBIfam" id="NF001898">
    <property type="entry name" value="PRK00654.1-1"/>
    <property type="match status" value="1"/>
</dbReference>
<dbReference type="PANTHER" id="PTHR45825:SF11">
    <property type="entry name" value="ALPHA AMYLASE DOMAIN-CONTAINING PROTEIN"/>
    <property type="match status" value="1"/>
</dbReference>
<dbReference type="PANTHER" id="PTHR45825">
    <property type="entry name" value="GRANULE-BOUND STARCH SYNTHASE 1, CHLOROPLASTIC/AMYLOPLASTIC"/>
    <property type="match status" value="1"/>
</dbReference>
<dbReference type="Pfam" id="PF08323">
    <property type="entry name" value="Glyco_transf_5"/>
    <property type="match status" value="1"/>
</dbReference>
<dbReference type="Pfam" id="PF00534">
    <property type="entry name" value="Glycos_transf_1"/>
    <property type="match status" value="1"/>
</dbReference>
<dbReference type="SUPFAM" id="SSF53756">
    <property type="entry name" value="UDP-Glycosyltransferase/glycogen phosphorylase"/>
    <property type="match status" value="1"/>
</dbReference>
<evidence type="ECO:0000255" key="1">
    <source>
        <dbReference type="HAMAP-Rule" id="MF_00484"/>
    </source>
</evidence>
<comment type="function">
    <text evidence="1">Synthesizes alpha-1,4-glucan chains using ADP-glucose.</text>
</comment>
<comment type="catalytic activity">
    <reaction evidence="1">
        <text>[(1-&gt;4)-alpha-D-glucosyl](n) + ADP-alpha-D-glucose = [(1-&gt;4)-alpha-D-glucosyl](n+1) + ADP + H(+)</text>
        <dbReference type="Rhea" id="RHEA:18189"/>
        <dbReference type="Rhea" id="RHEA-COMP:9584"/>
        <dbReference type="Rhea" id="RHEA-COMP:9587"/>
        <dbReference type="ChEBI" id="CHEBI:15378"/>
        <dbReference type="ChEBI" id="CHEBI:15444"/>
        <dbReference type="ChEBI" id="CHEBI:57498"/>
        <dbReference type="ChEBI" id="CHEBI:456216"/>
        <dbReference type="EC" id="2.4.1.21"/>
    </reaction>
</comment>
<comment type="pathway">
    <text evidence="1">Glycan biosynthesis; glycogen biosynthesis.</text>
</comment>
<comment type="similarity">
    <text evidence="1">Belongs to the glycosyltransferase 1 family. Bacterial/plant glycogen synthase subfamily.</text>
</comment>
<keyword id="KW-0320">Glycogen biosynthesis</keyword>
<keyword id="KW-0328">Glycosyltransferase</keyword>
<keyword id="KW-1185">Reference proteome</keyword>
<keyword id="KW-0808">Transferase</keyword>
<gene>
    <name evidence="1" type="primary">glgA</name>
    <name type="ordered locus">Cphy_2496</name>
</gene>
<name>GLGA_LACP7</name>
<proteinExistence type="inferred from homology"/>
<organism>
    <name type="scientific">Lachnoclostridium phytofermentans (strain ATCC 700394 / DSM 18823 / ISDg)</name>
    <name type="common">Clostridium phytofermentans</name>
    <dbReference type="NCBI Taxonomy" id="357809"/>
    <lineage>
        <taxon>Bacteria</taxon>
        <taxon>Bacillati</taxon>
        <taxon>Bacillota</taxon>
        <taxon>Clostridia</taxon>
        <taxon>Lachnospirales</taxon>
        <taxon>Lachnospiraceae</taxon>
    </lineage>
</organism>
<accession>A9KMA3</accession>
<sequence length="478" mass="55862">MKKILFVASESVPFIKTDGLADVVGSLPKYINKNNFDIRVILPNYMSIPRQWKEKMLYRTHFYMNLNWRTQYVGVLEYQYEGIWYYFIDNEFYFAGNKPYGNIYEDIEKFAFLSKAVLTCLPVLDFRPDIIHCHDWQTGLVPVFLHDSFQKNEFYHGIKTIMTIHNLKFQGVWDKKTVQDITALSEYYFSPDKLETYGDANYLKGGIVFSDYITTVSDTYAHDITMPFYGEGLDGLMRARSDCLCGIVNGIDYEEYNPEFDPFINKPYNAKNFRKEKIKNKRALQQELGLAKDDKAFMIGIVSRLIDQNGLDLIDCVMEDICAEDTQLIILGTGKDRYENLFRHYARKYSSRVSANIFYSNEQSHKIYAACDAFLMPSLFEPCGLSQLMSLRYGTVPIVRETGGLVDTVEPYNQHESTGTGFTFKNYNAHEMLYTIRFAKEIYQDKKREWNKIIDRGMAKDFSWKTSARKYEELYESL</sequence>